<sequence>MNPSFYPNQFDCIVVGAGHAGTEAAYISAKAGLKTLLITMNLDTIGQMSCNPAIGGIAKGHMVREVDALGGLMGRVIDQTGIQFKMLNTSKGPSVWAPRAQAEKKQYQLMIKHQLEKLQQLSIRQDTVEDLIVEGNQVTGVITGRGFTFYTNHVILTTGTFLSSVIHIGTYQKESGRIGEPTTKGLSHTLARFELRLGRLKTGTPARVHKNSINFDGLEIQDGDENPRPFSFSTKKIDRKQIPCFITYTNDTTHELIKQNLEYSPMYSGQIKSVGPRYCPSIEDKVVRFAERDRHQIFIEPEGYETNEMYLNGVSTSLPEEVQWKFLRSIKGLEQVELMRPGYAIEYDYVDPTELHPTLETKKVKGLYHAGQINGTTGYEEAAAQGLVAAYNVIRSVRKEEPILFKRSESYIGVLVDDLVYKGVEDPYRMFTSRAEYRLLLRQDNADQRLMQYGYEMGLVEESLYKDMKDRYARIESIKSHLFVSAMKPSPELTKVLEEKQITNYKFGHSLSSFLKRSDIKIKDLEPIVSELSILNEDEKAVLEMEVKYEGYLKRELETIEYRKKFLNFQIPIDFDYASVKGLKTEAIVKLEKHRPLNLENALHISGVDPSDVDLLLYHLVDRH</sequence>
<name>MNMG_LEPBA</name>
<evidence type="ECO:0000255" key="1">
    <source>
        <dbReference type="HAMAP-Rule" id="MF_00129"/>
    </source>
</evidence>
<comment type="function">
    <text evidence="1">NAD-binding protein involved in the addition of a carboxymethylaminomethyl (cmnm) group at the wobble position (U34) of certain tRNAs, forming tRNA-cmnm(5)s(2)U34.</text>
</comment>
<comment type="cofactor">
    <cofactor evidence="1">
        <name>FAD</name>
        <dbReference type="ChEBI" id="CHEBI:57692"/>
    </cofactor>
</comment>
<comment type="subunit">
    <text evidence="1">Homodimer. Heterotetramer of two MnmE and two MnmG subunits.</text>
</comment>
<comment type="subcellular location">
    <subcellularLocation>
        <location evidence="1">Cytoplasm</location>
    </subcellularLocation>
</comment>
<comment type="similarity">
    <text evidence="1">Belongs to the MnmG family.</text>
</comment>
<dbReference type="EMBL" id="CP000777">
    <property type="protein sequence ID" value="ABZ92548.1"/>
    <property type="molecule type" value="Genomic_DNA"/>
</dbReference>
<dbReference type="RefSeq" id="WP_012390392.1">
    <property type="nucleotide sequence ID" value="NC_010842.1"/>
</dbReference>
<dbReference type="SMR" id="B0S904"/>
<dbReference type="KEGG" id="lbf:LBF_0001"/>
<dbReference type="HOGENOM" id="CLU_007831_2_2_12"/>
<dbReference type="GO" id="GO:0005829">
    <property type="term" value="C:cytosol"/>
    <property type="evidence" value="ECO:0007669"/>
    <property type="project" value="TreeGrafter"/>
</dbReference>
<dbReference type="GO" id="GO:0050660">
    <property type="term" value="F:flavin adenine dinucleotide binding"/>
    <property type="evidence" value="ECO:0007669"/>
    <property type="project" value="UniProtKB-UniRule"/>
</dbReference>
<dbReference type="GO" id="GO:0030488">
    <property type="term" value="P:tRNA methylation"/>
    <property type="evidence" value="ECO:0007669"/>
    <property type="project" value="TreeGrafter"/>
</dbReference>
<dbReference type="GO" id="GO:0002098">
    <property type="term" value="P:tRNA wobble uridine modification"/>
    <property type="evidence" value="ECO:0007669"/>
    <property type="project" value="InterPro"/>
</dbReference>
<dbReference type="FunFam" id="1.10.150.570:FF:000001">
    <property type="entry name" value="tRNA uridine 5-carboxymethylaminomethyl modification enzyme MnmG"/>
    <property type="match status" value="1"/>
</dbReference>
<dbReference type="FunFam" id="3.50.50.60:FF:000002">
    <property type="entry name" value="tRNA uridine 5-carboxymethylaminomethyl modification enzyme MnmG"/>
    <property type="match status" value="1"/>
</dbReference>
<dbReference type="FunFam" id="3.50.50.60:FF:000010">
    <property type="entry name" value="tRNA uridine 5-carboxymethylaminomethyl modification enzyme MnmG"/>
    <property type="match status" value="1"/>
</dbReference>
<dbReference type="Gene3D" id="3.50.50.60">
    <property type="entry name" value="FAD/NAD(P)-binding domain"/>
    <property type="match status" value="2"/>
</dbReference>
<dbReference type="Gene3D" id="1.10.150.570">
    <property type="entry name" value="GidA associated domain, C-terminal subdomain"/>
    <property type="match status" value="1"/>
</dbReference>
<dbReference type="Gene3D" id="1.10.10.1800">
    <property type="entry name" value="tRNA uridine 5-carboxymethylaminomethyl modification enzyme MnmG/GidA"/>
    <property type="match status" value="1"/>
</dbReference>
<dbReference type="HAMAP" id="MF_00129">
    <property type="entry name" value="MnmG_GidA"/>
    <property type="match status" value="1"/>
</dbReference>
<dbReference type="InterPro" id="IPR036188">
    <property type="entry name" value="FAD/NAD-bd_sf"/>
</dbReference>
<dbReference type="InterPro" id="IPR049312">
    <property type="entry name" value="GIDA_C_N"/>
</dbReference>
<dbReference type="InterPro" id="IPR004416">
    <property type="entry name" value="MnmG"/>
</dbReference>
<dbReference type="InterPro" id="IPR002218">
    <property type="entry name" value="MnmG-rel"/>
</dbReference>
<dbReference type="InterPro" id="IPR020595">
    <property type="entry name" value="MnmG-rel_CS"/>
</dbReference>
<dbReference type="InterPro" id="IPR026904">
    <property type="entry name" value="MnmG_C"/>
</dbReference>
<dbReference type="InterPro" id="IPR047001">
    <property type="entry name" value="MnmG_C_subdom"/>
</dbReference>
<dbReference type="InterPro" id="IPR044920">
    <property type="entry name" value="MnmG_C_subdom_sf"/>
</dbReference>
<dbReference type="InterPro" id="IPR040131">
    <property type="entry name" value="MnmG_N"/>
</dbReference>
<dbReference type="NCBIfam" id="TIGR00136">
    <property type="entry name" value="mnmG_gidA"/>
    <property type="match status" value="1"/>
</dbReference>
<dbReference type="PANTHER" id="PTHR11806">
    <property type="entry name" value="GLUCOSE INHIBITED DIVISION PROTEIN A"/>
    <property type="match status" value="1"/>
</dbReference>
<dbReference type="PANTHER" id="PTHR11806:SF0">
    <property type="entry name" value="PROTEIN MTO1 HOMOLOG, MITOCHONDRIAL"/>
    <property type="match status" value="1"/>
</dbReference>
<dbReference type="Pfam" id="PF01134">
    <property type="entry name" value="GIDA"/>
    <property type="match status" value="1"/>
</dbReference>
<dbReference type="Pfam" id="PF21680">
    <property type="entry name" value="GIDA_C_1st"/>
    <property type="match status" value="1"/>
</dbReference>
<dbReference type="Pfam" id="PF13932">
    <property type="entry name" value="SAM_GIDA_C"/>
    <property type="match status" value="1"/>
</dbReference>
<dbReference type="SMART" id="SM01228">
    <property type="entry name" value="GIDA_assoc_3"/>
    <property type="match status" value="1"/>
</dbReference>
<dbReference type="SUPFAM" id="SSF51905">
    <property type="entry name" value="FAD/NAD(P)-binding domain"/>
    <property type="match status" value="1"/>
</dbReference>
<dbReference type="PROSITE" id="PS01280">
    <property type="entry name" value="GIDA_1"/>
    <property type="match status" value="1"/>
</dbReference>
<feature type="chain" id="PRO_0000345288" description="tRNA uridine 5-carboxymethylaminomethyl modification enzyme MnmG">
    <location>
        <begin position="1"/>
        <end position="624"/>
    </location>
</feature>
<feature type="binding site" evidence="1">
    <location>
        <begin position="16"/>
        <end position="21"/>
    </location>
    <ligand>
        <name>FAD</name>
        <dbReference type="ChEBI" id="CHEBI:57692"/>
    </ligand>
</feature>
<feature type="binding site" evidence="1">
    <location>
        <position position="128"/>
    </location>
    <ligand>
        <name>FAD</name>
        <dbReference type="ChEBI" id="CHEBI:57692"/>
    </ligand>
</feature>
<feature type="binding site" evidence="1">
    <location>
        <position position="183"/>
    </location>
    <ligand>
        <name>FAD</name>
        <dbReference type="ChEBI" id="CHEBI:57692"/>
    </ligand>
</feature>
<feature type="binding site" evidence="1">
    <location>
        <begin position="275"/>
        <end position="289"/>
    </location>
    <ligand>
        <name>NAD(+)</name>
        <dbReference type="ChEBI" id="CHEBI:57540"/>
    </ligand>
</feature>
<feature type="binding site" evidence="1">
    <location>
        <position position="372"/>
    </location>
    <ligand>
        <name>FAD</name>
        <dbReference type="ChEBI" id="CHEBI:57692"/>
    </ligand>
</feature>
<reference key="1">
    <citation type="journal article" date="2008" name="PLoS ONE">
        <title>Genome sequence of the saprophyte Leptospira biflexa provides insights into the evolution of Leptospira and the pathogenesis of leptospirosis.</title>
        <authorList>
            <person name="Picardeau M."/>
            <person name="Bulach D.M."/>
            <person name="Bouchier C."/>
            <person name="Zuerner R.L."/>
            <person name="Zidane N."/>
            <person name="Wilson P.J."/>
            <person name="Creno S."/>
            <person name="Kuczek E.S."/>
            <person name="Bommezzadri S."/>
            <person name="Davis J.C."/>
            <person name="McGrath A."/>
            <person name="Johnson M.J."/>
            <person name="Boursaux-Eude C."/>
            <person name="Seemann T."/>
            <person name="Rouy Z."/>
            <person name="Coppel R.L."/>
            <person name="Rood J.I."/>
            <person name="Lajus A."/>
            <person name="Davies J.K."/>
            <person name="Medigue C."/>
            <person name="Adler B."/>
        </authorList>
    </citation>
    <scope>NUCLEOTIDE SEQUENCE [LARGE SCALE GENOMIC DNA]</scope>
    <source>
        <strain>Patoc 1 / Ames</strain>
    </source>
</reference>
<keyword id="KW-0963">Cytoplasm</keyword>
<keyword id="KW-0274">FAD</keyword>
<keyword id="KW-0285">Flavoprotein</keyword>
<keyword id="KW-0520">NAD</keyword>
<keyword id="KW-0819">tRNA processing</keyword>
<proteinExistence type="inferred from homology"/>
<accession>B0S904</accession>
<protein>
    <recommendedName>
        <fullName evidence="1">tRNA uridine 5-carboxymethylaminomethyl modification enzyme MnmG</fullName>
    </recommendedName>
    <alternativeName>
        <fullName evidence="1">Glucose-inhibited division protein A</fullName>
    </alternativeName>
</protein>
<gene>
    <name evidence="1" type="primary">mnmG</name>
    <name evidence="1" type="synonym">gidA</name>
    <name type="ordered locus">LBF_0001</name>
</gene>
<organism>
    <name type="scientific">Leptospira biflexa serovar Patoc (strain Patoc 1 / Ames)</name>
    <dbReference type="NCBI Taxonomy" id="355278"/>
    <lineage>
        <taxon>Bacteria</taxon>
        <taxon>Pseudomonadati</taxon>
        <taxon>Spirochaetota</taxon>
        <taxon>Spirochaetia</taxon>
        <taxon>Leptospirales</taxon>
        <taxon>Leptospiraceae</taxon>
        <taxon>Leptospira</taxon>
    </lineage>
</organism>